<evidence type="ECO:0000250" key="1">
    <source>
        <dbReference type="UniProtKB" id="P53104"/>
    </source>
</evidence>
<evidence type="ECO:0000255" key="2">
    <source>
        <dbReference type="PROSITE-ProRule" id="PRU00159"/>
    </source>
</evidence>
<evidence type="ECO:0000255" key="3">
    <source>
        <dbReference type="PROSITE-ProRule" id="PRU10027"/>
    </source>
</evidence>
<evidence type="ECO:0000256" key="4">
    <source>
        <dbReference type="SAM" id="MobiDB-lite"/>
    </source>
</evidence>
<proteinExistence type="inferred from homology"/>
<gene>
    <name evidence="1" type="primary">atg1</name>
    <name type="ORF">BC1G_05432</name>
    <name type="ORF">BCIN_07g00720</name>
</gene>
<keyword id="KW-0067">ATP-binding</keyword>
<keyword id="KW-0072">Autophagy</keyword>
<keyword id="KW-0963">Cytoplasm</keyword>
<keyword id="KW-0418">Kinase</keyword>
<keyword id="KW-0472">Membrane</keyword>
<keyword id="KW-0547">Nucleotide-binding</keyword>
<keyword id="KW-0653">Protein transport</keyword>
<keyword id="KW-1185">Reference proteome</keyword>
<keyword id="KW-0723">Serine/threonine-protein kinase</keyword>
<keyword id="KW-0808">Transferase</keyword>
<keyword id="KW-0813">Transport</keyword>
<protein>
    <recommendedName>
        <fullName evidence="1">Serine/threonine-protein kinase atg1</fullName>
        <ecNumber evidence="1">2.7.11.1</ecNumber>
    </recommendedName>
    <alternativeName>
        <fullName evidence="1">Autophagy-related protein 1</fullName>
    </alternativeName>
</protein>
<organism>
    <name type="scientific">Botryotinia fuckeliana (strain B05.10)</name>
    <name type="common">Noble rot fungus</name>
    <name type="synonym">Botrytis cinerea</name>
    <dbReference type="NCBI Taxonomy" id="332648"/>
    <lineage>
        <taxon>Eukaryota</taxon>
        <taxon>Fungi</taxon>
        <taxon>Dikarya</taxon>
        <taxon>Ascomycota</taxon>
        <taxon>Pezizomycotina</taxon>
        <taxon>Leotiomycetes</taxon>
        <taxon>Helotiales</taxon>
        <taxon>Sclerotiniaceae</taxon>
        <taxon>Botrytis</taxon>
    </lineage>
</organism>
<feature type="chain" id="PRO_0000317791" description="Serine/threonine-protein kinase atg1">
    <location>
        <begin position="1"/>
        <end position="952"/>
    </location>
</feature>
<feature type="domain" description="Protein kinase" evidence="2">
    <location>
        <begin position="23"/>
        <end position="329"/>
    </location>
</feature>
<feature type="region of interest" description="Disordered" evidence="4">
    <location>
        <begin position="331"/>
        <end position="478"/>
    </location>
</feature>
<feature type="region of interest" description="Disordered" evidence="4">
    <location>
        <begin position="510"/>
        <end position="573"/>
    </location>
</feature>
<feature type="region of interest" description="Disordered" evidence="4">
    <location>
        <begin position="783"/>
        <end position="806"/>
    </location>
</feature>
<feature type="region of interest" description="Disordered" evidence="4">
    <location>
        <begin position="920"/>
        <end position="952"/>
    </location>
</feature>
<feature type="compositionally biased region" description="Basic and acidic residues" evidence="4">
    <location>
        <begin position="338"/>
        <end position="347"/>
    </location>
</feature>
<feature type="compositionally biased region" description="Basic and acidic residues" evidence="4">
    <location>
        <begin position="356"/>
        <end position="372"/>
    </location>
</feature>
<feature type="compositionally biased region" description="Polar residues" evidence="4">
    <location>
        <begin position="386"/>
        <end position="398"/>
    </location>
</feature>
<feature type="compositionally biased region" description="Basic and acidic residues" evidence="4">
    <location>
        <begin position="429"/>
        <end position="439"/>
    </location>
</feature>
<feature type="compositionally biased region" description="Polar residues" evidence="4">
    <location>
        <begin position="459"/>
        <end position="475"/>
    </location>
</feature>
<feature type="compositionally biased region" description="Polar residues" evidence="4">
    <location>
        <begin position="553"/>
        <end position="573"/>
    </location>
</feature>
<feature type="compositionally biased region" description="Polar residues" evidence="4">
    <location>
        <begin position="793"/>
        <end position="806"/>
    </location>
</feature>
<feature type="compositionally biased region" description="Low complexity" evidence="4">
    <location>
        <begin position="933"/>
        <end position="952"/>
    </location>
</feature>
<feature type="active site" description="Proton acceptor" evidence="2 3">
    <location>
        <position position="166"/>
    </location>
</feature>
<feature type="binding site" evidence="2">
    <location>
        <begin position="29"/>
        <end position="37"/>
    </location>
    <ligand>
        <name>ATP</name>
        <dbReference type="ChEBI" id="CHEBI:30616"/>
    </ligand>
</feature>
<feature type="binding site" evidence="2">
    <location>
        <position position="52"/>
    </location>
    <ligand>
        <name>ATP</name>
        <dbReference type="ChEBI" id="CHEBI:30616"/>
    </ligand>
</feature>
<comment type="function">
    <text evidence="1">Serine/threonine protein kinase involved in the cytoplasm to vacuole transport (Cvt) and found to be essential in autophagy, where it is required for the formation of autophagosomes. Involved in the clearance of protein aggregates which cannot be efficiently cleared by the proteasome. Required for selective autophagic degradation of the nucleus (nucleophagy) as well as for mitophagy which contributes to regulate mitochondrial quantity and quality by eliminating the mitochondria to a basal level to fulfill cellular energy requirements and preventing excess ROS production. Also involved in endoplasmic reticulum-specific autophagic process, in selective removal of ER-associated degradation (ERAD) substrates. Plays a key role in ATG9 and ATG23 cycling through the pre-autophagosomal structure and is necessary to promote ATG18 binding to ATG9 through phosphorylation of ATG9. Catalyzes phosphorylation of ATG4, decreasing the interaction between ATG4 and ATG8 and impairing deconjugation of PE-conjugated forms of ATG8.</text>
</comment>
<comment type="catalytic activity">
    <reaction evidence="1">
        <text>L-seryl-[protein] + ATP = O-phospho-L-seryl-[protein] + ADP + H(+)</text>
        <dbReference type="Rhea" id="RHEA:17989"/>
        <dbReference type="Rhea" id="RHEA-COMP:9863"/>
        <dbReference type="Rhea" id="RHEA-COMP:11604"/>
        <dbReference type="ChEBI" id="CHEBI:15378"/>
        <dbReference type="ChEBI" id="CHEBI:29999"/>
        <dbReference type="ChEBI" id="CHEBI:30616"/>
        <dbReference type="ChEBI" id="CHEBI:83421"/>
        <dbReference type="ChEBI" id="CHEBI:456216"/>
        <dbReference type="EC" id="2.7.11.1"/>
    </reaction>
</comment>
<comment type="catalytic activity">
    <reaction evidence="1">
        <text>L-threonyl-[protein] + ATP = O-phospho-L-threonyl-[protein] + ADP + H(+)</text>
        <dbReference type="Rhea" id="RHEA:46608"/>
        <dbReference type="Rhea" id="RHEA-COMP:11060"/>
        <dbReference type="Rhea" id="RHEA-COMP:11605"/>
        <dbReference type="ChEBI" id="CHEBI:15378"/>
        <dbReference type="ChEBI" id="CHEBI:30013"/>
        <dbReference type="ChEBI" id="CHEBI:30616"/>
        <dbReference type="ChEBI" id="CHEBI:61977"/>
        <dbReference type="ChEBI" id="CHEBI:456216"/>
        <dbReference type="EC" id="2.7.11.1"/>
    </reaction>
</comment>
<comment type="subunit">
    <text evidence="1">Homodimer. Forms a ternary complex with ATG13 and ATG17.</text>
</comment>
<comment type="subcellular location">
    <subcellularLocation>
        <location evidence="1">Cytoplasm</location>
    </subcellularLocation>
    <subcellularLocation>
        <location evidence="1">Preautophagosomal structure membrane</location>
        <topology evidence="1">Peripheral membrane protein</topology>
    </subcellularLocation>
</comment>
<comment type="similarity">
    <text evidence="2">Belongs to the protein kinase superfamily. Ser/Thr protein kinase family. APG1/unc-51/ULK1 subfamily.</text>
</comment>
<dbReference type="EC" id="2.7.11.1" evidence="1"/>
<dbReference type="EMBL" id="CP009811">
    <property type="protein sequence ID" value="ATZ51433.1"/>
    <property type="molecule type" value="Genomic_DNA"/>
</dbReference>
<dbReference type="RefSeq" id="XP_001556061.1">
    <property type="nucleotide sequence ID" value="XM_001556011.1"/>
</dbReference>
<dbReference type="SMR" id="A6RYB8"/>
<dbReference type="EnsemblFungi" id="Bcin07g00720.1">
    <property type="protein sequence ID" value="Bcin07p00720.1"/>
    <property type="gene ID" value="Bcin07g00720"/>
</dbReference>
<dbReference type="VEuPathDB" id="FungiDB:Bcin07g00720"/>
<dbReference type="OMA" id="INNVVQW"/>
<dbReference type="OrthoDB" id="346907at2759"/>
<dbReference type="PHI-base" id="PHI:6159"/>
<dbReference type="Proteomes" id="UP000001798">
    <property type="component" value="Chromosome bcin07"/>
</dbReference>
<dbReference type="GO" id="GO:1990316">
    <property type="term" value="C:Atg1/ULK1 kinase complex"/>
    <property type="evidence" value="ECO:0007669"/>
    <property type="project" value="EnsemblFungi"/>
</dbReference>
<dbReference type="GO" id="GO:0000421">
    <property type="term" value="C:autophagosome membrane"/>
    <property type="evidence" value="ECO:0007669"/>
    <property type="project" value="EnsemblFungi"/>
</dbReference>
<dbReference type="GO" id="GO:0005829">
    <property type="term" value="C:cytosol"/>
    <property type="evidence" value="ECO:0007669"/>
    <property type="project" value="EnsemblFungi"/>
</dbReference>
<dbReference type="GO" id="GO:0061908">
    <property type="term" value="C:phagophore"/>
    <property type="evidence" value="ECO:0007669"/>
    <property type="project" value="EnsemblFungi"/>
</dbReference>
<dbReference type="GO" id="GO:0034045">
    <property type="term" value="C:phagophore assembly site membrane"/>
    <property type="evidence" value="ECO:0007669"/>
    <property type="project" value="UniProtKB-SubCell"/>
</dbReference>
<dbReference type="GO" id="GO:0120095">
    <property type="term" value="C:vacuole-isolation membrane contact site"/>
    <property type="evidence" value="ECO:0007669"/>
    <property type="project" value="EnsemblFungi"/>
</dbReference>
<dbReference type="GO" id="GO:0005524">
    <property type="term" value="F:ATP binding"/>
    <property type="evidence" value="ECO:0007669"/>
    <property type="project" value="UniProtKB-KW"/>
</dbReference>
<dbReference type="GO" id="GO:0106310">
    <property type="term" value="F:protein serine kinase activity"/>
    <property type="evidence" value="ECO:0007669"/>
    <property type="project" value="RHEA"/>
</dbReference>
<dbReference type="GO" id="GO:0004674">
    <property type="term" value="F:protein serine/threonine kinase activity"/>
    <property type="evidence" value="ECO:0007669"/>
    <property type="project" value="UniProtKB-KW"/>
</dbReference>
<dbReference type="GO" id="GO:0000422">
    <property type="term" value="P:autophagy of mitochondrion"/>
    <property type="evidence" value="ECO:0007669"/>
    <property type="project" value="EnsemblFungi"/>
</dbReference>
<dbReference type="GO" id="GO:0006995">
    <property type="term" value="P:cellular response to nitrogen starvation"/>
    <property type="evidence" value="ECO:0007669"/>
    <property type="project" value="EnsemblFungi"/>
</dbReference>
<dbReference type="GO" id="GO:0051365">
    <property type="term" value="P:cellular response to potassium ion starvation"/>
    <property type="evidence" value="ECO:0007669"/>
    <property type="project" value="EnsemblFungi"/>
</dbReference>
<dbReference type="GO" id="GO:0034727">
    <property type="term" value="P:piecemeal microautophagy of the nucleus"/>
    <property type="evidence" value="ECO:0007669"/>
    <property type="project" value="EnsemblFungi"/>
</dbReference>
<dbReference type="GO" id="GO:0034497">
    <property type="term" value="P:protein localization to phagophore assembly site"/>
    <property type="evidence" value="ECO:0007669"/>
    <property type="project" value="EnsemblFungi"/>
</dbReference>
<dbReference type="GO" id="GO:0015031">
    <property type="term" value="P:protein transport"/>
    <property type="evidence" value="ECO:0007669"/>
    <property type="project" value="UniProtKB-KW"/>
</dbReference>
<dbReference type="GO" id="GO:0010506">
    <property type="term" value="P:regulation of autophagy"/>
    <property type="evidence" value="ECO:0007669"/>
    <property type="project" value="InterPro"/>
</dbReference>
<dbReference type="GO" id="GO:0061709">
    <property type="term" value="P:reticulophagy"/>
    <property type="evidence" value="ECO:0007669"/>
    <property type="project" value="EnsemblFungi"/>
</dbReference>
<dbReference type="CDD" id="cd14009">
    <property type="entry name" value="STKc_ATG1_ULK_like"/>
    <property type="match status" value="1"/>
</dbReference>
<dbReference type="FunFam" id="3.30.200.20:FF:000042">
    <property type="entry name" value="Aurora kinase A"/>
    <property type="match status" value="1"/>
</dbReference>
<dbReference type="FunFam" id="1.10.510.10:FF:000817">
    <property type="entry name" value="Serine/threonine-protein kinase ATG1"/>
    <property type="match status" value="1"/>
</dbReference>
<dbReference type="Gene3D" id="1.10.510.10">
    <property type="entry name" value="Transferase(Phosphotransferase) domain 1"/>
    <property type="match status" value="1"/>
</dbReference>
<dbReference type="InterPro" id="IPR045269">
    <property type="entry name" value="Atg1-like"/>
</dbReference>
<dbReference type="InterPro" id="IPR048941">
    <property type="entry name" value="ATG1-like_MIT2"/>
</dbReference>
<dbReference type="InterPro" id="IPR022708">
    <property type="entry name" value="Atg1-like_tMIT"/>
</dbReference>
<dbReference type="InterPro" id="IPR011009">
    <property type="entry name" value="Kinase-like_dom_sf"/>
</dbReference>
<dbReference type="InterPro" id="IPR000719">
    <property type="entry name" value="Prot_kinase_dom"/>
</dbReference>
<dbReference type="InterPro" id="IPR017441">
    <property type="entry name" value="Protein_kinase_ATP_BS"/>
</dbReference>
<dbReference type="InterPro" id="IPR008271">
    <property type="entry name" value="Ser/Thr_kinase_AS"/>
</dbReference>
<dbReference type="PANTHER" id="PTHR24348:SF22">
    <property type="entry name" value="NON-SPECIFIC SERINE_THREONINE PROTEIN KINASE"/>
    <property type="match status" value="1"/>
</dbReference>
<dbReference type="PANTHER" id="PTHR24348">
    <property type="entry name" value="SERINE/THREONINE-PROTEIN KINASE UNC-51-RELATED"/>
    <property type="match status" value="1"/>
</dbReference>
<dbReference type="Pfam" id="PF12063">
    <property type="entry name" value="ATG1-like_MIT1"/>
    <property type="match status" value="1"/>
</dbReference>
<dbReference type="Pfam" id="PF21127">
    <property type="entry name" value="ATG1-like_MIT2"/>
    <property type="match status" value="1"/>
</dbReference>
<dbReference type="Pfam" id="PF00069">
    <property type="entry name" value="Pkinase"/>
    <property type="match status" value="1"/>
</dbReference>
<dbReference type="SMART" id="SM00220">
    <property type="entry name" value="S_TKc"/>
    <property type="match status" value="1"/>
</dbReference>
<dbReference type="SUPFAM" id="SSF56112">
    <property type="entry name" value="Protein kinase-like (PK-like)"/>
    <property type="match status" value="1"/>
</dbReference>
<dbReference type="PROSITE" id="PS00107">
    <property type="entry name" value="PROTEIN_KINASE_ATP"/>
    <property type="match status" value="1"/>
</dbReference>
<dbReference type="PROSITE" id="PS50011">
    <property type="entry name" value="PROTEIN_KINASE_DOM"/>
    <property type="match status" value="1"/>
</dbReference>
<dbReference type="PROSITE" id="PS00108">
    <property type="entry name" value="PROTEIN_KINASE_ST"/>
    <property type="match status" value="1"/>
</dbReference>
<reference key="1">
    <citation type="journal article" date="2011" name="PLoS Genet.">
        <title>Genomic analysis of the necrotrophic fungal pathogens Sclerotinia sclerotiorum and Botrytis cinerea.</title>
        <authorList>
            <person name="Amselem J."/>
            <person name="Cuomo C.A."/>
            <person name="van Kan J.A.L."/>
            <person name="Viaud M."/>
            <person name="Benito E.P."/>
            <person name="Couloux A."/>
            <person name="Coutinho P.M."/>
            <person name="de Vries R.P."/>
            <person name="Dyer P.S."/>
            <person name="Fillinger S."/>
            <person name="Fournier E."/>
            <person name="Gout L."/>
            <person name="Hahn M."/>
            <person name="Kohn L."/>
            <person name="Lapalu N."/>
            <person name="Plummer K.M."/>
            <person name="Pradier J.-M."/>
            <person name="Quevillon E."/>
            <person name="Sharon A."/>
            <person name="Simon A."/>
            <person name="ten Have A."/>
            <person name="Tudzynski B."/>
            <person name="Tudzynski P."/>
            <person name="Wincker P."/>
            <person name="Andrew M."/>
            <person name="Anthouard V."/>
            <person name="Beever R.E."/>
            <person name="Beffa R."/>
            <person name="Benoit I."/>
            <person name="Bouzid O."/>
            <person name="Brault B."/>
            <person name="Chen Z."/>
            <person name="Choquer M."/>
            <person name="Collemare J."/>
            <person name="Cotton P."/>
            <person name="Danchin E.G."/>
            <person name="Da Silva C."/>
            <person name="Gautier A."/>
            <person name="Giraud C."/>
            <person name="Giraud T."/>
            <person name="Gonzalez C."/>
            <person name="Grossetete S."/>
            <person name="Gueldener U."/>
            <person name="Henrissat B."/>
            <person name="Howlett B.J."/>
            <person name="Kodira C."/>
            <person name="Kretschmer M."/>
            <person name="Lappartient A."/>
            <person name="Leroch M."/>
            <person name="Levis C."/>
            <person name="Mauceli E."/>
            <person name="Neuveglise C."/>
            <person name="Oeser B."/>
            <person name="Pearson M."/>
            <person name="Poulain J."/>
            <person name="Poussereau N."/>
            <person name="Quesneville H."/>
            <person name="Rascle C."/>
            <person name="Schumacher J."/>
            <person name="Segurens B."/>
            <person name="Sexton A."/>
            <person name="Silva E."/>
            <person name="Sirven C."/>
            <person name="Soanes D.M."/>
            <person name="Talbot N.J."/>
            <person name="Templeton M."/>
            <person name="Yandava C."/>
            <person name="Yarden O."/>
            <person name="Zeng Q."/>
            <person name="Rollins J.A."/>
            <person name="Lebrun M.-H."/>
            <person name="Dickman M."/>
        </authorList>
    </citation>
    <scope>NUCLEOTIDE SEQUENCE [LARGE SCALE GENOMIC DNA]</scope>
    <source>
        <strain>B05.10</strain>
    </source>
</reference>
<reference key="2">
    <citation type="journal article" date="2012" name="Eukaryot. Cell">
        <title>Genome update of Botrytis cinerea strains B05.10 and T4.</title>
        <authorList>
            <person name="Staats M."/>
            <person name="van Kan J.A.L."/>
        </authorList>
    </citation>
    <scope>NUCLEOTIDE SEQUENCE [LARGE SCALE GENOMIC DNA]</scope>
    <scope>GENOME REANNOTATION</scope>
    <source>
        <strain>B05.10</strain>
    </source>
</reference>
<reference key="3">
    <citation type="journal article" date="2017" name="Mol. Plant Pathol.">
        <title>A gapless genome sequence of the fungus Botrytis cinerea.</title>
        <authorList>
            <person name="van Kan J.A.L."/>
            <person name="Stassen J.H.M."/>
            <person name="Mosbach A."/>
            <person name="van der Lee T.A.J."/>
            <person name="Faino L."/>
            <person name="Farmer A.D."/>
            <person name="Papasotiriou D.G."/>
            <person name="Zhou S."/>
            <person name="Seidl M.F."/>
            <person name="Cottam E."/>
            <person name="Edel D."/>
            <person name="Hahn M."/>
            <person name="Schwartz D.C."/>
            <person name="Dietrich R.A."/>
            <person name="Widdison S."/>
            <person name="Scalliet G."/>
        </authorList>
    </citation>
    <scope>NUCLEOTIDE SEQUENCE [LARGE SCALE GENOMIC DNA]</scope>
    <scope>GENOME REANNOTATION</scope>
    <source>
        <strain>B05.10</strain>
    </source>
</reference>
<name>ATG1_BOTFB</name>
<accession>A6RYB8</accession>
<accession>A0A384JLJ4</accession>
<sequence length="952" mass="105041">MASTTTSTSSLSSRRQKTGVGSFTINEQIGKGSFATVYRGTHMPSGNLVAIKSVNLSRLNKKLKDNLYVEIEILKSLYHPHIVALIDCRESASHIHLMMEYCELGDLSYFIKKRDRLADNPTLYDMVQKYPMPVEGGLNQVVVRHFFKQLSSAMEFLRERDFVHRDVKPQNLLLIPSPEWIAKRAKGGPEAMKASKESVVAMVGINSLPMLKLADFGFARSLPSTSLAETLCGSPLYMAPEILRYEKYDARADLWSIGTVLYEMMTGRPPFKAINHVQLLQKIEKNQDEIRFPSRGIYSRDLKDIVRRLLKKKPEDRITFPEYFAHPVVTEPIPGLVGDDRPKEKSPETSIVRQPSLRDRQRESPTVKHIDTAYESLITRDIGEQSPRTPNIESNQPFGTPGRSSGRPDSRDRPSPVSAATAPNVDTLPRQRDRKDRTEPNYAPIVRTGSTKQRYDEQANLQPKNEVQSSNSITEAEQDVRDAREYVLVEKKAVEVNAFADEMAANPRLGRANSAPKQLPRRHTSMGEPNSTTGAVAVPPSRIVQRASGRAQPDTSSARNSYGSYGKTGSSPSTASAIAKALQGASVRVFGVSWSPTLIGKGPSPPQLYNPYPAYPTPNAGLIGDGRPIDEDQRVVNIIEDSATRSDVVYGFAEVKYRQLIPLAPSMNHGLGGPNPERTGDAMDEDDGLTVEAIVNLSEEALVLYVKSLSLLSKSMDIAGAWWSRKQRGGIVSGGHTPGSDSSSAAQAGNRINGAVQWVRTRFNEVLEKAELVRLKLVEAQKRLPEDHPGHPNNRSTASRLVGGSSTTDGVVLSSGITAEKLMYDRALEMSRTAAINELANEDLPGCEISYTTAIRMLEAVLENDEELIPRKRSSSLREDKEKSEGGEVNGINFGDRKDVLKVLQMIRTRLQVLKKKMTAIAKHQSMPPPSSSPRRSYSGGTTPTINNTPPK</sequence>